<gene>
    <name type="primary">YNR1</name>
</gene>
<reference key="1">
    <citation type="journal article" date="1995" name="FEBS Lett.">
        <title>Cloning and disruption of the YNR1 gene encoding the nitrate reductase apoenzyme of the yeast Hansenula polymorpha.</title>
        <authorList>
            <person name="Avila J."/>
            <person name="Perez M.D."/>
            <person name="Brito N."/>
            <person name="Gonzalez C."/>
            <person name="Siverio J.M."/>
        </authorList>
    </citation>
    <scope>NUCLEOTIDE SEQUENCE [GENOMIC DNA]</scope>
    <source>
        <strain>ATCC 14754 / CBS 1976 / JCM 3620 / NBRC 0799 / NCYC 495 / NRRL Y-1798 / VKM Y-1397</strain>
    </source>
</reference>
<reference key="2">
    <citation type="journal article" date="2005" name="Plant Cell">
        <title>Structural basis of eukaryotic nitrate reduction: crystal structures of the nitrate reductase active site.</title>
        <authorList>
            <person name="Fischer K."/>
            <person name="Barbier G.G."/>
            <person name="Hecht H.J."/>
            <person name="Mendel R.R."/>
            <person name="Campbell W.H."/>
            <person name="Schwarz G."/>
        </authorList>
    </citation>
    <scope>X-RAY CRYSTALLOGRAPHY (1.7 ANGSTROMS) OF 19-478 IN COMPLEX WITH MO-MOLYBDOPTERIN</scope>
    <scope>COFACTOR</scope>
    <scope>SUBUNIT</scope>
    <scope>REACTION MECHANISM</scope>
</reference>
<proteinExistence type="evidence at protein level"/>
<name>NIA_PICAN</name>
<dbReference type="EC" id="1.7.1.3"/>
<dbReference type="EMBL" id="Z49110">
    <property type="protein sequence ID" value="CAA88925.1"/>
    <property type="molecule type" value="Genomic_DNA"/>
</dbReference>
<dbReference type="PIR" id="S65938">
    <property type="entry name" value="S65938"/>
</dbReference>
<dbReference type="PDB" id="2BIH">
    <property type="method" value="X-ray"/>
    <property type="resolution" value="2.60 A"/>
    <property type="chains" value="A=19-478"/>
</dbReference>
<dbReference type="PDB" id="2BII">
    <property type="method" value="X-ray"/>
    <property type="resolution" value="1.70 A"/>
    <property type="chains" value="A/B=59-478"/>
</dbReference>
<dbReference type="PDBsum" id="2BIH"/>
<dbReference type="PDBsum" id="2BII"/>
<dbReference type="SMR" id="P49050"/>
<dbReference type="BRENDA" id="1.7.1.3">
    <property type="organism ID" value="2587"/>
</dbReference>
<dbReference type="EvolutionaryTrace" id="P49050"/>
<dbReference type="GO" id="GO:0071949">
    <property type="term" value="F:FAD binding"/>
    <property type="evidence" value="ECO:0000250"/>
    <property type="project" value="UniProtKB"/>
</dbReference>
<dbReference type="GO" id="GO:0020037">
    <property type="term" value="F:heme binding"/>
    <property type="evidence" value="ECO:0007669"/>
    <property type="project" value="InterPro"/>
</dbReference>
<dbReference type="GO" id="GO:0030151">
    <property type="term" value="F:molybdenum ion binding"/>
    <property type="evidence" value="ECO:0000314"/>
    <property type="project" value="UniProtKB"/>
</dbReference>
<dbReference type="GO" id="GO:0043546">
    <property type="term" value="F:molybdopterin cofactor binding"/>
    <property type="evidence" value="ECO:0000314"/>
    <property type="project" value="UniProtKB"/>
</dbReference>
<dbReference type="GO" id="GO:0050464">
    <property type="term" value="F:nitrate reductase (NADPH) activity"/>
    <property type="evidence" value="ECO:0007669"/>
    <property type="project" value="UniProtKB-EC"/>
</dbReference>
<dbReference type="GO" id="GO:0008482">
    <property type="term" value="F:sulfite oxidase activity"/>
    <property type="evidence" value="ECO:0007669"/>
    <property type="project" value="TreeGrafter"/>
</dbReference>
<dbReference type="GO" id="GO:0042128">
    <property type="term" value="P:nitrate assimilation"/>
    <property type="evidence" value="ECO:0007669"/>
    <property type="project" value="UniProtKB-KW"/>
</dbReference>
<dbReference type="GO" id="GO:0006809">
    <property type="term" value="P:nitric oxide biosynthetic process"/>
    <property type="evidence" value="ECO:0007669"/>
    <property type="project" value="InterPro"/>
</dbReference>
<dbReference type="GO" id="GO:0006790">
    <property type="term" value="P:sulfur compound metabolic process"/>
    <property type="evidence" value="ECO:0007669"/>
    <property type="project" value="TreeGrafter"/>
</dbReference>
<dbReference type="CDD" id="cd06183">
    <property type="entry name" value="cyt_b5_reduct_like"/>
    <property type="match status" value="1"/>
</dbReference>
<dbReference type="CDD" id="cd02112">
    <property type="entry name" value="eukary_NR_Moco"/>
    <property type="match status" value="1"/>
</dbReference>
<dbReference type="FunFam" id="2.40.30.10:FF:000021">
    <property type="entry name" value="NADH-cytochrome b5 reductase"/>
    <property type="match status" value="1"/>
</dbReference>
<dbReference type="FunFam" id="3.90.420.10:FF:000005">
    <property type="entry name" value="Nitrate reductase"/>
    <property type="match status" value="1"/>
</dbReference>
<dbReference type="Gene3D" id="2.60.40.650">
    <property type="match status" value="1"/>
</dbReference>
<dbReference type="Gene3D" id="3.10.120.10">
    <property type="entry name" value="Cytochrome b5-like heme/steroid binding domain"/>
    <property type="match status" value="1"/>
</dbReference>
<dbReference type="Gene3D" id="3.40.50.80">
    <property type="entry name" value="Nucleotide-binding domain of ferredoxin-NADP reductase (FNR) module"/>
    <property type="match status" value="1"/>
</dbReference>
<dbReference type="Gene3D" id="3.90.420.10">
    <property type="entry name" value="Oxidoreductase, molybdopterin-binding domain"/>
    <property type="match status" value="1"/>
</dbReference>
<dbReference type="Gene3D" id="2.40.30.10">
    <property type="entry name" value="Translation factors"/>
    <property type="match status" value="1"/>
</dbReference>
<dbReference type="InterPro" id="IPR008333">
    <property type="entry name" value="Cbr1-like_FAD-bd_dom"/>
</dbReference>
<dbReference type="InterPro" id="IPR001199">
    <property type="entry name" value="Cyt_B5-like_heme/steroid-bd"/>
</dbReference>
<dbReference type="InterPro" id="IPR036400">
    <property type="entry name" value="Cyt_B5-like_heme/steroid_sf"/>
</dbReference>
<dbReference type="InterPro" id="IPR018506">
    <property type="entry name" value="Cyt_B5_heme-BS"/>
</dbReference>
<dbReference type="InterPro" id="IPR017927">
    <property type="entry name" value="FAD-bd_FR_type"/>
</dbReference>
<dbReference type="InterPro" id="IPR001709">
    <property type="entry name" value="Flavoprot_Pyr_Nucl_cyt_Rdtase"/>
</dbReference>
<dbReference type="InterPro" id="IPR039261">
    <property type="entry name" value="FNR_nucleotide-bd"/>
</dbReference>
<dbReference type="InterPro" id="IPR014756">
    <property type="entry name" value="Ig_E-set"/>
</dbReference>
<dbReference type="InterPro" id="IPR005066">
    <property type="entry name" value="MoCF_OxRdtse_dimer"/>
</dbReference>
<dbReference type="InterPro" id="IPR008335">
    <property type="entry name" value="Mopterin_OxRdtase_euk"/>
</dbReference>
<dbReference type="InterPro" id="IPR012137">
    <property type="entry name" value="Nitr_rd_NADH"/>
</dbReference>
<dbReference type="InterPro" id="IPR001433">
    <property type="entry name" value="OxRdtase_FAD/NAD-bd"/>
</dbReference>
<dbReference type="InterPro" id="IPR000572">
    <property type="entry name" value="OxRdtase_Mopterin-bd_dom"/>
</dbReference>
<dbReference type="InterPro" id="IPR036374">
    <property type="entry name" value="OxRdtase_Mopterin-bd_sf"/>
</dbReference>
<dbReference type="InterPro" id="IPR022407">
    <property type="entry name" value="OxRdtase_Mopterin_BS"/>
</dbReference>
<dbReference type="InterPro" id="IPR017938">
    <property type="entry name" value="Riboflavin_synthase-like_b-brl"/>
</dbReference>
<dbReference type="PANTHER" id="PTHR19372:SF7">
    <property type="entry name" value="SULFITE OXIDASE, MITOCHONDRIAL"/>
    <property type="match status" value="1"/>
</dbReference>
<dbReference type="PANTHER" id="PTHR19372">
    <property type="entry name" value="SULFITE REDUCTASE"/>
    <property type="match status" value="1"/>
</dbReference>
<dbReference type="Pfam" id="PF00173">
    <property type="entry name" value="Cyt-b5"/>
    <property type="match status" value="1"/>
</dbReference>
<dbReference type="Pfam" id="PF00970">
    <property type="entry name" value="FAD_binding_6"/>
    <property type="match status" value="1"/>
</dbReference>
<dbReference type="Pfam" id="PF03404">
    <property type="entry name" value="Mo-co_dimer"/>
    <property type="match status" value="1"/>
</dbReference>
<dbReference type="Pfam" id="PF00175">
    <property type="entry name" value="NAD_binding_1"/>
    <property type="match status" value="1"/>
</dbReference>
<dbReference type="Pfam" id="PF00174">
    <property type="entry name" value="Oxidored_molyb"/>
    <property type="match status" value="1"/>
</dbReference>
<dbReference type="PIRSF" id="PIRSF000233">
    <property type="entry name" value="Nitr_rd_NADH"/>
    <property type="match status" value="1"/>
</dbReference>
<dbReference type="PRINTS" id="PR00406">
    <property type="entry name" value="CYTB5RDTASE"/>
</dbReference>
<dbReference type="PRINTS" id="PR00363">
    <property type="entry name" value="CYTOCHROMEB5"/>
</dbReference>
<dbReference type="PRINTS" id="PR00407">
    <property type="entry name" value="EUMOPTERIN"/>
</dbReference>
<dbReference type="PRINTS" id="PR00371">
    <property type="entry name" value="FPNCR"/>
</dbReference>
<dbReference type="SMART" id="SM01117">
    <property type="entry name" value="Cyt-b5"/>
    <property type="match status" value="1"/>
</dbReference>
<dbReference type="SUPFAM" id="SSF55856">
    <property type="entry name" value="Cytochrome b5-like heme/steroid binding domain"/>
    <property type="match status" value="1"/>
</dbReference>
<dbReference type="SUPFAM" id="SSF81296">
    <property type="entry name" value="E set domains"/>
    <property type="match status" value="1"/>
</dbReference>
<dbReference type="SUPFAM" id="SSF52343">
    <property type="entry name" value="Ferredoxin reductase-like, C-terminal NADP-linked domain"/>
    <property type="match status" value="1"/>
</dbReference>
<dbReference type="SUPFAM" id="SSF56524">
    <property type="entry name" value="Oxidoreductase molybdopterin-binding domain"/>
    <property type="match status" value="1"/>
</dbReference>
<dbReference type="SUPFAM" id="SSF63380">
    <property type="entry name" value="Riboflavin synthase domain-like"/>
    <property type="match status" value="1"/>
</dbReference>
<dbReference type="PROSITE" id="PS00191">
    <property type="entry name" value="CYTOCHROME_B5_1"/>
    <property type="match status" value="1"/>
</dbReference>
<dbReference type="PROSITE" id="PS50255">
    <property type="entry name" value="CYTOCHROME_B5_2"/>
    <property type="match status" value="1"/>
</dbReference>
<dbReference type="PROSITE" id="PS51384">
    <property type="entry name" value="FAD_FR"/>
    <property type="match status" value="1"/>
</dbReference>
<dbReference type="PROSITE" id="PS00559">
    <property type="entry name" value="MOLYBDOPTERIN_EUK"/>
    <property type="match status" value="1"/>
</dbReference>
<accession>P49050</accession>
<evidence type="ECO:0000250" key="1"/>
<evidence type="ECO:0000250" key="2">
    <source>
        <dbReference type="UniProtKB" id="A0A286R227"/>
    </source>
</evidence>
<evidence type="ECO:0000250" key="3">
    <source>
        <dbReference type="UniProtKB" id="P17571"/>
    </source>
</evidence>
<evidence type="ECO:0000255" key="4"/>
<evidence type="ECO:0000255" key="5">
    <source>
        <dbReference type="PROSITE-ProRule" id="PRU00279"/>
    </source>
</evidence>
<evidence type="ECO:0000255" key="6">
    <source>
        <dbReference type="PROSITE-ProRule" id="PRU00716"/>
    </source>
</evidence>
<evidence type="ECO:0000269" key="7">
    <source>
    </source>
</evidence>
<evidence type="ECO:0000305" key="8"/>
<evidence type="ECO:0000305" key="9">
    <source>
    </source>
</evidence>
<evidence type="ECO:0007744" key="10">
    <source>
        <dbReference type="PDB" id="2BII"/>
    </source>
</evidence>
<evidence type="ECO:0007829" key="11">
    <source>
        <dbReference type="PDB" id="2BIH"/>
    </source>
</evidence>
<evidence type="ECO:0007829" key="12">
    <source>
        <dbReference type="PDB" id="2BII"/>
    </source>
</evidence>
<sequence length="859" mass="98534">MDSIVTEVTYGLEIKKIKDITELPFPVRQDSPLTEVLPTDLKTKDNFVARDPDLLRLTGSHPFNSEPPLTKLYDSGFLTPVSLHFVRNHGPVPYVPDENILDWEVSIEGMVETPYKIKLSDIMEQFDIYSTPVTMVCAGNRRKEQNMVKKGAGFNWGAAGTSTSLWTGCMLGDVIGKARPSKRARFVWMEGADNPANGAYRTCIRLSWCMDPERCIMIAYQQNGEWLHPDHGKPLRVVIPGVIGGRSVKWLKKLVVSDRPSENWYHYFDNRVLPTMVTPEMAKSDDRWWKDERYAIYDLNLQTIICKPENQQVIKISEDEYEIAGFGYNGGGVRIGRIEVSLDKGKSWKLADIDYPEDRYREAGYFRLFGGLVNVCDRMSCLCWCFWKLKVPLSELARSKDILIRGMDERMMVQPRTMYWNVTSMLNNWWYRVAIIREGESLRFEHPVVANKPGGWMDRVKAEGGDILDNNWGEVDDTVKQAERRPHIDEDLEMMCNREKMDVVIKYSEFEAHKDSETEPWFAVKGQVFDGSSYLEDHPGGAQSILMVSGEDATDDFIAIHSSFAKKLLPSMHLGRLEEVSSVTKVKSVEQNVKREVLLDPRKWHKITLAEKEVISSDSRIFKFDLEHSEQLSGLPTGKHLFLRLKDSSGKYVMRAYTPKSSNSLRGRLEILIKVYFPNREYPNGGIMTNLIENLQVGNQIEVKGPVGEFEYVKCGHCSFNNKPYQMKHFVMISGGSGITPTYQVLQAIFSDPEDRTSVQLFFGNKKVDDILLREELDHIQEKYPEQFKVDYSLSDLDHLPENWSGVRGRLTFDILDTYVRGKKMGEYMLLVCGPPGMNGVVENWCNARKLDKQYVVYF</sequence>
<feature type="chain" id="PRO_0000166044" description="Nitrate reductase [NADPH]">
    <location>
        <begin position="1"/>
        <end position="859"/>
    </location>
</feature>
<feature type="domain" description="Cytochrome b5 heme-binding" evidence="5">
    <location>
        <begin position="502"/>
        <end position="578"/>
    </location>
</feature>
<feature type="domain" description="FAD-binding FR-type" evidence="6">
    <location>
        <begin position="602"/>
        <end position="713"/>
    </location>
</feature>
<feature type="binding site" evidence="7 10">
    <location>
        <position position="137"/>
    </location>
    <ligand>
        <name>Mo-molybdopterin</name>
        <dbReference type="ChEBI" id="CHEBI:71302"/>
    </ligand>
    <ligandPart>
        <name>Mo</name>
        <dbReference type="ChEBI" id="CHEBI:28685"/>
    </ligandPart>
</feature>
<feature type="binding site" description="axial binding residue" evidence="5">
    <location>
        <position position="538"/>
    </location>
    <ligand>
        <name>heme</name>
        <dbReference type="ChEBI" id="CHEBI:30413"/>
    </ligand>
    <ligandPart>
        <name>Fe</name>
        <dbReference type="ChEBI" id="CHEBI:18248"/>
    </ligandPart>
</feature>
<feature type="binding site" description="axial binding residue" evidence="5">
    <location>
        <position position="561"/>
    </location>
    <ligand>
        <name>heme</name>
        <dbReference type="ChEBI" id="CHEBI:30413"/>
    </ligand>
    <ligandPart>
        <name>Fe</name>
        <dbReference type="ChEBI" id="CHEBI:18248"/>
    </ligandPart>
</feature>
<feature type="binding site" evidence="2">
    <location>
        <begin position="655"/>
        <end position="658"/>
    </location>
    <ligand>
        <name>FAD</name>
        <dbReference type="ChEBI" id="CHEBI:57692"/>
    </ligand>
</feature>
<feature type="binding site" evidence="2">
    <location>
        <begin position="672"/>
        <end position="676"/>
    </location>
    <ligand>
        <name>FAD</name>
        <dbReference type="ChEBI" id="CHEBI:57692"/>
    </ligand>
</feature>
<feature type="binding site" evidence="3">
    <location>
        <position position="677"/>
    </location>
    <ligand>
        <name>FAD</name>
        <dbReference type="ChEBI" id="CHEBI:57692"/>
    </ligand>
</feature>
<feature type="binding site" evidence="2">
    <location>
        <begin position="687"/>
        <end position="689"/>
    </location>
    <ligand>
        <name>FAD</name>
        <dbReference type="ChEBI" id="CHEBI:57692"/>
    </ligand>
</feature>
<feature type="binding site" evidence="3">
    <location>
        <position position="737"/>
    </location>
    <ligand>
        <name>FAD</name>
        <dbReference type="ChEBI" id="CHEBI:57692"/>
    </ligand>
</feature>
<feature type="binding site" evidence="2">
    <location>
        <position position="740"/>
    </location>
    <ligand>
        <name>FAD</name>
        <dbReference type="ChEBI" id="CHEBI:57692"/>
    </ligand>
</feature>
<feature type="binding site" evidence="1">
    <location>
        <begin position="829"/>
        <end position="838"/>
    </location>
    <ligand>
        <name>NADP(+)</name>
        <dbReference type="ChEBI" id="CHEBI:58349"/>
    </ligand>
</feature>
<feature type="disulfide bond" description="Interchain" evidence="4">
    <location>
        <position position="383"/>
    </location>
</feature>
<feature type="helix" evidence="11">
    <location>
        <begin position="38"/>
        <end position="41"/>
    </location>
</feature>
<feature type="turn" evidence="11">
    <location>
        <begin position="44"/>
        <end position="47"/>
    </location>
</feature>
<feature type="strand" evidence="11">
    <location>
        <begin position="54"/>
        <end position="58"/>
    </location>
</feature>
<feature type="strand" evidence="12">
    <location>
        <begin position="63"/>
        <end position="65"/>
    </location>
</feature>
<feature type="helix" evidence="12">
    <location>
        <begin position="69"/>
        <end position="74"/>
    </location>
</feature>
<feature type="helix" evidence="12">
    <location>
        <begin position="81"/>
        <end position="83"/>
    </location>
</feature>
<feature type="strand" evidence="12">
    <location>
        <begin position="86"/>
        <end position="90"/>
    </location>
</feature>
<feature type="helix" evidence="12">
    <location>
        <begin position="97"/>
        <end position="102"/>
    </location>
</feature>
<feature type="strand" evidence="12">
    <location>
        <begin position="104"/>
        <end position="113"/>
    </location>
</feature>
<feature type="strand" evidence="12">
    <location>
        <begin position="115"/>
        <end position="118"/>
    </location>
</feature>
<feature type="helix" evidence="12">
    <location>
        <begin position="119"/>
        <end position="125"/>
    </location>
</feature>
<feature type="strand" evidence="12">
    <location>
        <begin position="129"/>
        <end position="136"/>
    </location>
</feature>
<feature type="turn" evidence="12">
    <location>
        <begin position="138"/>
        <end position="141"/>
    </location>
</feature>
<feature type="helix" evidence="12">
    <location>
        <begin position="142"/>
        <end position="148"/>
    </location>
</feature>
<feature type="strand" evidence="12">
    <location>
        <begin position="161"/>
        <end position="170"/>
    </location>
</feature>
<feature type="helix" evidence="12">
    <location>
        <begin position="171"/>
        <end position="178"/>
    </location>
</feature>
<feature type="strand" evidence="12">
    <location>
        <begin position="186"/>
        <end position="192"/>
    </location>
</feature>
<feature type="strand" evidence="12">
    <location>
        <begin position="201"/>
        <end position="205"/>
    </location>
</feature>
<feature type="helix" evidence="12">
    <location>
        <begin position="206"/>
        <end position="209"/>
    </location>
</feature>
<feature type="turn" evidence="12">
    <location>
        <begin position="212"/>
        <end position="214"/>
    </location>
</feature>
<feature type="strand" evidence="12">
    <location>
        <begin position="217"/>
        <end position="222"/>
    </location>
</feature>
<feature type="helix" evidence="12">
    <location>
        <begin position="229"/>
        <end position="231"/>
    </location>
</feature>
<feature type="turn" evidence="12">
    <location>
        <begin position="232"/>
        <end position="234"/>
    </location>
</feature>
<feature type="strand" evidence="12">
    <location>
        <begin position="236"/>
        <end position="238"/>
    </location>
</feature>
<feature type="helix" evidence="12">
    <location>
        <begin position="244"/>
        <end position="246"/>
    </location>
</feature>
<feature type="strand" evidence="12">
    <location>
        <begin position="249"/>
        <end position="259"/>
    </location>
</feature>
<feature type="helix" evidence="12">
    <location>
        <begin position="264"/>
        <end position="267"/>
    </location>
</feature>
<feature type="strand" evidence="12">
    <location>
        <begin position="268"/>
        <end position="271"/>
    </location>
</feature>
<feature type="helix" evidence="12">
    <location>
        <begin position="279"/>
        <end position="284"/>
    </location>
</feature>
<feature type="helix" evidence="12">
    <location>
        <begin position="286"/>
        <end position="289"/>
    </location>
</feature>
<feature type="helix" evidence="12">
    <location>
        <begin position="292"/>
        <end position="294"/>
    </location>
</feature>
<feature type="strand" evidence="12">
    <location>
        <begin position="302"/>
        <end position="308"/>
    </location>
</feature>
<feature type="strand" evidence="12">
    <location>
        <begin position="313"/>
        <end position="315"/>
    </location>
</feature>
<feature type="strand" evidence="12">
    <location>
        <begin position="320"/>
        <end position="328"/>
    </location>
</feature>
<feature type="strand" evidence="12">
    <location>
        <begin position="335"/>
        <end position="343"/>
    </location>
</feature>
<feature type="strand" evidence="12">
    <location>
        <begin position="352"/>
        <end position="354"/>
    </location>
</feature>
<feature type="helix" evidence="12">
    <location>
        <begin position="357"/>
        <end position="362"/>
    </location>
</feature>
<feature type="strand" evidence="12">
    <location>
        <begin position="365"/>
        <end position="368"/>
    </location>
</feature>
<feature type="strand" evidence="12">
    <location>
        <begin position="371"/>
        <end position="373"/>
    </location>
</feature>
<feature type="helix" evidence="12">
    <location>
        <begin position="375"/>
        <end position="377"/>
    </location>
</feature>
<feature type="strand" evidence="12">
    <location>
        <begin position="385"/>
        <end position="392"/>
    </location>
</feature>
<feature type="helix" evidence="12">
    <location>
        <begin position="393"/>
        <end position="397"/>
    </location>
</feature>
<feature type="strand" evidence="12">
    <location>
        <begin position="400"/>
        <end position="408"/>
    </location>
</feature>
<feature type="strand" evidence="12">
    <location>
        <begin position="431"/>
        <end position="438"/>
    </location>
</feature>
<feature type="strand" evidence="12">
    <location>
        <begin position="441"/>
        <end position="445"/>
    </location>
</feature>
<feature type="strand" evidence="11">
    <location>
        <begin position="450"/>
        <end position="452"/>
    </location>
</feature>
<feature type="helix" evidence="12">
    <location>
        <begin position="456"/>
        <end position="462"/>
    </location>
</feature>
<feature type="turn" evidence="12">
    <location>
        <begin position="470"/>
        <end position="473"/>
    </location>
</feature>
<protein>
    <recommendedName>
        <fullName>Nitrate reductase [NADPH]</fullName>
        <shortName>NR</shortName>
        <ecNumber>1.7.1.3</ecNumber>
    </recommendedName>
</protein>
<keyword id="KW-0002">3D-structure</keyword>
<keyword id="KW-1015">Disulfide bond</keyword>
<keyword id="KW-0274">FAD</keyword>
<keyword id="KW-0285">Flavoprotein</keyword>
<keyword id="KW-0349">Heme</keyword>
<keyword id="KW-0408">Iron</keyword>
<keyword id="KW-0479">Metal-binding</keyword>
<keyword id="KW-0500">Molybdenum</keyword>
<keyword id="KW-0521">NADP</keyword>
<keyword id="KW-0534">Nitrate assimilation</keyword>
<keyword id="KW-0560">Oxidoreductase</keyword>
<comment type="function">
    <text>Nitrate reductase is a key enzyme involved in the first step of nitrate assimilation in plants, fungi and bacteria.</text>
</comment>
<comment type="catalytic activity">
    <reaction>
        <text>nitrite + NADP(+) + H2O = nitrate + NADPH + H(+)</text>
        <dbReference type="Rhea" id="RHEA:19061"/>
        <dbReference type="ChEBI" id="CHEBI:15377"/>
        <dbReference type="ChEBI" id="CHEBI:15378"/>
        <dbReference type="ChEBI" id="CHEBI:16301"/>
        <dbReference type="ChEBI" id="CHEBI:17632"/>
        <dbReference type="ChEBI" id="CHEBI:57783"/>
        <dbReference type="ChEBI" id="CHEBI:58349"/>
        <dbReference type="EC" id="1.7.1.3"/>
    </reaction>
</comment>
<comment type="cofactor">
    <cofactor evidence="1">
        <name>FAD</name>
        <dbReference type="ChEBI" id="CHEBI:57692"/>
    </cofactor>
    <text evidence="1">Binds 1 FAD.</text>
</comment>
<comment type="cofactor">
    <cofactor evidence="1">
        <name>heme</name>
        <dbReference type="ChEBI" id="CHEBI:30413"/>
    </cofactor>
    <text evidence="1">Binds 1 heme group. The heme group is called cytochrome b-557.</text>
</comment>
<comment type="cofactor">
    <cofactor evidence="7">
        <name>Mo-molybdopterin</name>
        <dbReference type="ChEBI" id="CHEBI:71302"/>
    </cofactor>
    <text evidence="7">Binds 1 Mo-molybdopterin (Mo-MPT) cofactor per subunit.</text>
</comment>
<comment type="subunit">
    <text evidence="9">Homodimer.</text>
</comment>
<comment type="similarity">
    <text evidence="8">Belongs to the nitrate reductase family.</text>
</comment>
<organism>
    <name type="scientific">Pichia angusta</name>
    <name type="common">Yeast</name>
    <name type="synonym">Hansenula polymorpha</name>
    <dbReference type="NCBI Taxonomy" id="870730"/>
    <lineage>
        <taxon>Eukaryota</taxon>
        <taxon>Fungi</taxon>
        <taxon>Dikarya</taxon>
        <taxon>Ascomycota</taxon>
        <taxon>Saccharomycotina</taxon>
        <taxon>Pichiomycetes</taxon>
        <taxon>Pichiales</taxon>
        <taxon>Pichiaceae</taxon>
        <taxon>Ogataea</taxon>
    </lineage>
</organism>